<accession>C4XI08</accession>
<evidence type="ECO:0000255" key="1">
    <source>
        <dbReference type="HAMAP-Rule" id="MF_01346"/>
    </source>
</evidence>
<reference key="1">
    <citation type="journal article" date="2009" name="Genome Res.">
        <title>Whole genome sequence of Desulfovibrio magneticus strain RS-1 revealed common gene clusters in magnetotactic bacteria.</title>
        <authorList>
            <person name="Nakazawa H."/>
            <person name="Arakaki A."/>
            <person name="Narita-Yamada S."/>
            <person name="Yashiro I."/>
            <person name="Jinno K."/>
            <person name="Aoki N."/>
            <person name="Tsuruyama A."/>
            <person name="Okamura Y."/>
            <person name="Tanikawa S."/>
            <person name="Fujita N."/>
            <person name="Takeyama H."/>
            <person name="Matsunaga T."/>
        </authorList>
    </citation>
    <scope>NUCLEOTIDE SEQUENCE [LARGE SCALE GENOMIC DNA]</scope>
    <source>
        <strain>ATCC 700980 / DSM 13731 / RS-1</strain>
    </source>
</reference>
<dbReference type="EC" id="7.1.2.2" evidence="1"/>
<dbReference type="EMBL" id="AP010904">
    <property type="protein sequence ID" value="BAH73970.1"/>
    <property type="molecule type" value="Genomic_DNA"/>
</dbReference>
<dbReference type="RefSeq" id="WP_006920166.1">
    <property type="nucleotide sequence ID" value="NC_012796.1"/>
</dbReference>
<dbReference type="SMR" id="C4XI08"/>
<dbReference type="STRING" id="573370.DMR_04790"/>
<dbReference type="KEGG" id="dma:DMR_04790"/>
<dbReference type="eggNOG" id="COG0056">
    <property type="taxonomic scope" value="Bacteria"/>
</dbReference>
<dbReference type="HOGENOM" id="CLU_010091_2_1_7"/>
<dbReference type="OrthoDB" id="9803053at2"/>
<dbReference type="Proteomes" id="UP000009071">
    <property type="component" value="Chromosome"/>
</dbReference>
<dbReference type="GO" id="GO:0005886">
    <property type="term" value="C:plasma membrane"/>
    <property type="evidence" value="ECO:0007669"/>
    <property type="project" value="UniProtKB-SubCell"/>
</dbReference>
<dbReference type="GO" id="GO:0045259">
    <property type="term" value="C:proton-transporting ATP synthase complex"/>
    <property type="evidence" value="ECO:0007669"/>
    <property type="project" value="UniProtKB-KW"/>
</dbReference>
<dbReference type="GO" id="GO:0043531">
    <property type="term" value="F:ADP binding"/>
    <property type="evidence" value="ECO:0007669"/>
    <property type="project" value="TreeGrafter"/>
</dbReference>
<dbReference type="GO" id="GO:0005524">
    <property type="term" value="F:ATP binding"/>
    <property type="evidence" value="ECO:0007669"/>
    <property type="project" value="UniProtKB-UniRule"/>
</dbReference>
<dbReference type="GO" id="GO:0046933">
    <property type="term" value="F:proton-transporting ATP synthase activity, rotational mechanism"/>
    <property type="evidence" value="ECO:0007669"/>
    <property type="project" value="UniProtKB-UniRule"/>
</dbReference>
<dbReference type="CDD" id="cd18113">
    <property type="entry name" value="ATP-synt_F1_alpha_C"/>
    <property type="match status" value="1"/>
</dbReference>
<dbReference type="CDD" id="cd18116">
    <property type="entry name" value="ATP-synt_F1_alpha_N"/>
    <property type="match status" value="1"/>
</dbReference>
<dbReference type="CDD" id="cd01132">
    <property type="entry name" value="F1-ATPase_alpha_CD"/>
    <property type="match status" value="1"/>
</dbReference>
<dbReference type="FunFam" id="1.20.150.20:FF:000001">
    <property type="entry name" value="ATP synthase subunit alpha"/>
    <property type="match status" value="1"/>
</dbReference>
<dbReference type="FunFam" id="2.40.30.20:FF:000001">
    <property type="entry name" value="ATP synthase subunit alpha"/>
    <property type="match status" value="1"/>
</dbReference>
<dbReference type="FunFam" id="3.40.50.300:FF:000002">
    <property type="entry name" value="ATP synthase subunit alpha"/>
    <property type="match status" value="1"/>
</dbReference>
<dbReference type="Gene3D" id="2.40.30.20">
    <property type="match status" value="1"/>
</dbReference>
<dbReference type="Gene3D" id="1.20.150.20">
    <property type="entry name" value="ATP synthase alpha/beta chain, C-terminal domain"/>
    <property type="match status" value="1"/>
</dbReference>
<dbReference type="Gene3D" id="3.40.50.300">
    <property type="entry name" value="P-loop containing nucleotide triphosphate hydrolases"/>
    <property type="match status" value="1"/>
</dbReference>
<dbReference type="HAMAP" id="MF_01346">
    <property type="entry name" value="ATP_synth_alpha_bact"/>
    <property type="match status" value="1"/>
</dbReference>
<dbReference type="InterPro" id="IPR023366">
    <property type="entry name" value="ATP_synth_asu-like_sf"/>
</dbReference>
<dbReference type="InterPro" id="IPR000793">
    <property type="entry name" value="ATP_synth_asu_C"/>
</dbReference>
<dbReference type="InterPro" id="IPR038376">
    <property type="entry name" value="ATP_synth_asu_C_sf"/>
</dbReference>
<dbReference type="InterPro" id="IPR033732">
    <property type="entry name" value="ATP_synth_F1_a_nt-bd_dom"/>
</dbReference>
<dbReference type="InterPro" id="IPR005294">
    <property type="entry name" value="ATP_synth_F1_asu"/>
</dbReference>
<dbReference type="InterPro" id="IPR020003">
    <property type="entry name" value="ATPase_a/bsu_AS"/>
</dbReference>
<dbReference type="InterPro" id="IPR004100">
    <property type="entry name" value="ATPase_F1/V1/A1_a/bsu_N"/>
</dbReference>
<dbReference type="InterPro" id="IPR036121">
    <property type="entry name" value="ATPase_F1/V1/A1_a/bsu_N_sf"/>
</dbReference>
<dbReference type="InterPro" id="IPR000194">
    <property type="entry name" value="ATPase_F1/V1/A1_a/bsu_nucl-bd"/>
</dbReference>
<dbReference type="InterPro" id="IPR027417">
    <property type="entry name" value="P-loop_NTPase"/>
</dbReference>
<dbReference type="NCBIfam" id="TIGR00962">
    <property type="entry name" value="atpA"/>
    <property type="match status" value="1"/>
</dbReference>
<dbReference type="NCBIfam" id="NF009884">
    <property type="entry name" value="PRK13343.1"/>
    <property type="match status" value="1"/>
</dbReference>
<dbReference type="PANTHER" id="PTHR48082">
    <property type="entry name" value="ATP SYNTHASE SUBUNIT ALPHA, MITOCHONDRIAL"/>
    <property type="match status" value="1"/>
</dbReference>
<dbReference type="PANTHER" id="PTHR48082:SF2">
    <property type="entry name" value="ATP SYNTHASE SUBUNIT ALPHA, MITOCHONDRIAL"/>
    <property type="match status" value="1"/>
</dbReference>
<dbReference type="Pfam" id="PF00006">
    <property type="entry name" value="ATP-synt_ab"/>
    <property type="match status" value="1"/>
</dbReference>
<dbReference type="Pfam" id="PF00306">
    <property type="entry name" value="ATP-synt_ab_C"/>
    <property type="match status" value="1"/>
</dbReference>
<dbReference type="Pfam" id="PF02874">
    <property type="entry name" value="ATP-synt_ab_N"/>
    <property type="match status" value="1"/>
</dbReference>
<dbReference type="PIRSF" id="PIRSF039088">
    <property type="entry name" value="F_ATPase_subunit_alpha"/>
    <property type="match status" value="1"/>
</dbReference>
<dbReference type="SUPFAM" id="SSF47917">
    <property type="entry name" value="C-terminal domain of alpha and beta subunits of F1 ATP synthase"/>
    <property type="match status" value="1"/>
</dbReference>
<dbReference type="SUPFAM" id="SSF50615">
    <property type="entry name" value="N-terminal domain of alpha and beta subunits of F1 ATP synthase"/>
    <property type="match status" value="1"/>
</dbReference>
<dbReference type="SUPFAM" id="SSF52540">
    <property type="entry name" value="P-loop containing nucleoside triphosphate hydrolases"/>
    <property type="match status" value="1"/>
</dbReference>
<dbReference type="PROSITE" id="PS00152">
    <property type="entry name" value="ATPASE_ALPHA_BETA"/>
    <property type="match status" value="1"/>
</dbReference>
<keyword id="KW-0066">ATP synthesis</keyword>
<keyword id="KW-0067">ATP-binding</keyword>
<keyword id="KW-0997">Cell inner membrane</keyword>
<keyword id="KW-1003">Cell membrane</keyword>
<keyword id="KW-0139">CF(1)</keyword>
<keyword id="KW-0375">Hydrogen ion transport</keyword>
<keyword id="KW-0406">Ion transport</keyword>
<keyword id="KW-0472">Membrane</keyword>
<keyword id="KW-0547">Nucleotide-binding</keyword>
<keyword id="KW-1278">Translocase</keyword>
<keyword id="KW-0813">Transport</keyword>
<sequence>MQIKAEEISQIIEQQIQHYESRVEMSETGTVLSVGDQIARVYGVQNAMAMELLEFPGGVMGLVLNLEEDNVGVALLGEDTHIKEGDPVKRTGKIFSVPVGDAVTGRVIDPLGNPIDGLGPVEAKETRNVEIKAPGIIARKSVHEPMYTGLKAVDAMTPIGRGQRELIIGDRQTGKTAVCIDAILAQKGQGVFCFYVAIGQKKSTVALVAETLRRHGAMEYTTIISATASEPASLQFMSAYSGCTMAEYHRDNGRAALIIYDDLSKQAVSYRQMSLLLRRPPGREAYPGDVFYLHSRLLERAAKLSDALGAGSLTALPIIETQAGDVSAYIPTNVISITDGQVYLEPNLFNAGIRPAINVGLSVSRVGGAAQVKAMKQVAGTLRLDLAQYRELAAFAQFGSDLDKATQLKLSRGMRMVELLKQPQYKPMNVAEQVISLFAGTRGFMDDVPVEAVRKFEEGLQEYFHNAKSDILNEIQEKKALDEGLIAKLGAAIDEFKKGFKA</sequence>
<comment type="function">
    <text evidence="1">Produces ATP from ADP in the presence of a proton gradient across the membrane. The alpha chain is a regulatory subunit.</text>
</comment>
<comment type="catalytic activity">
    <reaction evidence="1">
        <text>ATP + H2O + 4 H(+)(in) = ADP + phosphate + 5 H(+)(out)</text>
        <dbReference type="Rhea" id="RHEA:57720"/>
        <dbReference type="ChEBI" id="CHEBI:15377"/>
        <dbReference type="ChEBI" id="CHEBI:15378"/>
        <dbReference type="ChEBI" id="CHEBI:30616"/>
        <dbReference type="ChEBI" id="CHEBI:43474"/>
        <dbReference type="ChEBI" id="CHEBI:456216"/>
        <dbReference type="EC" id="7.1.2.2"/>
    </reaction>
</comment>
<comment type="subunit">
    <text evidence="1">F-type ATPases have 2 components, CF(1) - the catalytic core - and CF(0) - the membrane proton channel. CF(1) has five subunits: alpha(3), beta(3), gamma(1), delta(1), epsilon(1). CF(0) has three main subunits: a(1), b(2) and c(9-12). The alpha and beta chains form an alternating ring which encloses part of the gamma chain. CF(1) is attached to CF(0) by a central stalk formed by the gamma and epsilon chains, while a peripheral stalk is formed by the delta and b chains.</text>
</comment>
<comment type="subcellular location">
    <subcellularLocation>
        <location evidence="1">Cell inner membrane</location>
        <topology evidence="1">Peripheral membrane protein</topology>
    </subcellularLocation>
</comment>
<comment type="similarity">
    <text evidence="1">Belongs to the ATPase alpha/beta chains family.</text>
</comment>
<protein>
    <recommendedName>
        <fullName evidence="1">ATP synthase subunit alpha</fullName>
        <ecNumber evidence="1">7.1.2.2</ecNumber>
    </recommendedName>
    <alternativeName>
        <fullName evidence="1">ATP synthase F1 sector subunit alpha</fullName>
    </alternativeName>
    <alternativeName>
        <fullName evidence="1">F-ATPase subunit alpha</fullName>
    </alternativeName>
</protein>
<name>ATPA_SOLM1</name>
<gene>
    <name evidence="1" type="primary">atpA</name>
    <name type="ordered locus">DMR_04790</name>
</gene>
<proteinExistence type="inferred from homology"/>
<organism>
    <name type="scientific">Solidesulfovibrio magneticus (strain ATCC 700980 / DSM 13731 / RS-1)</name>
    <name type="common">Desulfovibrio magneticus</name>
    <dbReference type="NCBI Taxonomy" id="573370"/>
    <lineage>
        <taxon>Bacteria</taxon>
        <taxon>Pseudomonadati</taxon>
        <taxon>Thermodesulfobacteriota</taxon>
        <taxon>Desulfovibrionia</taxon>
        <taxon>Desulfovibrionales</taxon>
        <taxon>Desulfovibrionaceae</taxon>
        <taxon>Solidesulfovibrio</taxon>
    </lineage>
</organism>
<feature type="chain" id="PRO_1000214806" description="ATP synthase subunit alpha">
    <location>
        <begin position="1"/>
        <end position="502"/>
    </location>
</feature>
<feature type="binding site" evidence="1">
    <location>
        <begin position="169"/>
        <end position="176"/>
    </location>
    <ligand>
        <name>ATP</name>
        <dbReference type="ChEBI" id="CHEBI:30616"/>
    </ligand>
</feature>
<feature type="site" description="Required for activity" evidence="1">
    <location>
        <position position="362"/>
    </location>
</feature>